<keyword id="KW-0145">Chemotaxis</keyword>
<keyword id="KW-0164">Citrullination</keyword>
<keyword id="KW-0202">Cytokine</keyword>
<keyword id="KW-1015">Disulfide bond</keyword>
<keyword id="KW-0395">Inflammatory response</keyword>
<keyword id="KW-1185">Reference proteome</keyword>
<keyword id="KW-0964">Secreted</keyword>
<keyword id="KW-0732">Signal</keyword>
<feature type="signal peptide" evidence="1">
    <location>
        <begin position="1"/>
        <end position="22"/>
    </location>
</feature>
<feature type="chain" id="PRO_0000005132" description="Interleukin-8">
    <location>
        <begin position="23"/>
        <end position="101"/>
    </location>
</feature>
<feature type="modified residue" description="Citrulline" evidence="1">
    <location>
        <position position="27"/>
    </location>
</feature>
<feature type="disulfide bond" evidence="1">
    <location>
        <begin position="34"/>
        <end position="61"/>
    </location>
</feature>
<feature type="disulfide bond" evidence="1">
    <location>
        <begin position="36"/>
        <end position="77"/>
    </location>
</feature>
<sequence length="101" mass="11320">MTSKLAVALLAAFLLSAALCEGAVLPRSAKELRCECIKTYSKPFHPKFIKELRVIESGPHCANTEIIVKLSDGRELCLDPKEPWVQRVVEKFVKRAENQNP</sequence>
<comment type="function">
    <text evidence="2">Chemotactic factor that mediates inflammatory response by attracting neutrophils, basophils, and T-cells to clear pathogens and protect the host from infection. Also plays an important role in neutrophil activation. Released in response to an inflammatory stimulus, exerts its effect by binding to the G-protein-coupled receptors CXCR1 and CXCR2, primarily found in neutrophils, monocytes and endothelial cells. G-protein heterotrimer (alpha, beta, gamma subunits) constitutively binds to CXCR1/CXCR2 receptor and activation by IL8 leads to beta and gamma subunits release from Galpha (GNAI2 in neutrophils) and activation of several downstream signaling pathways including PI3K and MAPK pathways.</text>
</comment>
<comment type="subunit">
    <text evidence="2">Homodimer. Interacts with TNFAIP6 (via Link domain); this interaction interferes with chemokine binding to glycosaminoglycans.</text>
</comment>
<comment type="subcellular location">
    <subcellularLocation>
        <location>Secreted</location>
    </subcellularLocation>
</comment>
<comment type="PTM">
    <text evidence="1">Citrullination at Arg-27 prevents proteolysis, and dampens tissue inflammation, it also enhances leukocytosis, possibly through impaired chemokine clearance from the blood circulation.</text>
</comment>
<comment type="similarity">
    <text evidence="3">Belongs to the intercrine alpha (chemokine CxC) family.</text>
</comment>
<reference key="1">
    <citation type="journal article" date="1995" name="J. Immunol.">
        <title>Comparative sequence analysis of cytokine genes from human and nonhuman primates.</title>
        <authorList>
            <person name="Villinger F.J."/>
            <person name="Brar S.S."/>
            <person name="Mayne A.E."/>
            <person name="Chikkala N."/>
            <person name="Ansari A.A."/>
        </authorList>
    </citation>
    <scope>NUCLEOTIDE SEQUENCE [MRNA]</scope>
    <source>
        <tissue>Blood</tissue>
    </source>
</reference>
<reference key="2">
    <citation type="journal article" date="1995" name="Inflammation">
        <title>Identification and characterization of rhesus macaque interleukin-8.</title>
        <authorList>
            <person name="Minnerly J.C."/>
            <person name="Baganoff M.P."/>
            <person name="Deppeler C.L."/>
            <person name="Keller B.T."/>
            <person name="Rapp S.R."/>
            <person name="Widomski D.L."/>
            <person name="Fretland D.J."/>
            <person name="Bolanowski M.A."/>
        </authorList>
    </citation>
    <scope>NUCLEOTIDE SEQUENCE [MRNA]</scope>
    <source>
        <tissue>Blood</tissue>
    </source>
</reference>
<evidence type="ECO:0000250" key="1"/>
<evidence type="ECO:0000250" key="2">
    <source>
        <dbReference type="UniProtKB" id="P10145"/>
    </source>
</evidence>
<evidence type="ECO:0000305" key="3"/>
<organism>
    <name type="scientific">Macaca mulatta</name>
    <name type="common">Rhesus macaque</name>
    <dbReference type="NCBI Taxonomy" id="9544"/>
    <lineage>
        <taxon>Eukaryota</taxon>
        <taxon>Metazoa</taxon>
        <taxon>Chordata</taxon>
        <taxon>Craniata</taxon>
        <taxon>Vertebrata</taxon>
        <taxon>Euteleostomi</taxon>
        <taxon>Mammalia</taxon>
        <taxon>Eutheria</taxon>
        <taxon>Euarchontoglires</taxon>
        <taxon>Primates</taxon>
        <taxon>Haplorrhini</taxon>
        <taxon>Catarrhini</taxon>
        <taxon>Cercopithecidae</taxon>
        <taxon>Cercopithecinae</taxon>
        <taxon>Macaca</taxon>
    </lineage>
</organism>
<protein>
    <recommendedName>
        <fullName>Interleukin-8</fullName>
        <shortName>IL-8</shortName>
    </recommendedName>
    <alternativeName>
        <fullName>C-X-C motif chemokine 8</fullName>
    </alternativeName>
    <alternativeName>
        <fullName>Chemokine (C-X-C motif) ligand 8</fullName>
    </alternativeName>
</protein>
<gene>
    <name type="primary">CXCL8</name>
    <name type="synonym">IL8</name>
</gene>
<proteinExistence type="inferred from homology"/>
<dbReference type="EMBL" id="U19849">
    <property type="protein sequence ID" value="AAA86711.1"/>
    <property type="molecule type" value="mRNA"/>
</dbReference>
<dbReference type="EMBL" id="S78555">
    <property type="protein sequence ID" value="AAA80141.2"/>
    <property type="molecule type" value="mRNA"/>
</dbReference>
<dbReference type="RefSeq" id="NP_001028137.1">
    <property type="nucleotide sequence ID" value="NM_001032965.1"/>
</dbReference>
<dbReference type="SMR" id="P67813"/>
<dbReference type="FunCoup" id="P67813">
    <property type="interactions" value="1164"/>
</dbReference>
<dbReference type="STRING" id="9544.ENSMMUP00000072289"/>
<dbReference type="PaxDb" id="9544-ENSMMUP00000005115"/>
<dbReference type="ABCD" id="P67813">
    <property type="antibodies" value="1 sequenced antibody"/>
</dbReference>
<dbReference type="Ensembl" id="ENSMMUT00000100547.1">
    <property type="protein sequence ID" value="ENSMMUP00000072289.1"/>
    <property type="gene ID" value="ENSMMUG00000060156.1"/>
</dbReference>
<dbReference type="GeneID" id="613028"/>
<dbReference type="KEGG" id="mcc:613028"/>
<dbReference type="CTD" id="3576"/>
<dbReference type="VEuPathDB" id="HostDB:ENSMMUG00000060156"/>
<dbReference type="VGNC" id="VGNC:100214">
    <property type="gene designation" value="CXCL8"/>
</dbReference>
<dbReference type="eggNOG" id="ENOG502S7MM">
    <property type="taxonomic scope" value="Eukaryota"/>
</dbReference>
<dbReference type="GeneTree" id="ENSGT00940000160757"/>
<dbReference type="InParanoid" id="P67813"/>
<dbReference type="OMA" id="IGTELRC"/>
<dbReference type="OrthoDB" id="9937393at2759"/>
<dbReference type="Proteomes" id="UP000006718">
    <property type="component" value="Chromosome 5"/>
</dbReference>
<dbReference type="Bgee" id="ENSMMUG00000060156">
    <property type="expression patterns" value="Expressed in fibroblast and 18 other cell types or tissues"/>
</dbReference>
<dbReference type="GO" id="GO:0005615">
    <property type="term" value="C:extracellular space"/>
    <property type="evidence" value="ECO:0000318"/>
    <property type="project" value="GO_Central"/>
</dbReference>
<dbReference type="GO" id="GO:0008009">
    <property type="term" value="F:chemokine activity"/>
    <property type="evidence" value="ECO:0000318"/>
    <property type="project" value="GO_Central"/>
</dbReference>
<dbReference type="GO" id="GO:0045236">
    <property type="term" value="F:CXCR chemokine receptor binding"/>
    <property type="evidence" value="ECO:0000318"/>
    <property type="project" value="GO_Central"/>
</dbReference>
<dbReference type="GO" id="GO:0008201">
    <property type="term" value="F:heparin binding"/>
    <property type="evidence" value="ECO:0000250"/>
    <property type="project" value="UniProtKB"/>
</dbReference>
<dbReference type="GO" id="GO:0005153">
    <property type="term" value="F:interleukin-8 receptor binding"/>
    <property type="evidence" value="ECO:0000250"/>
    <property type="project" value="UniProtKB"/>
</dbReference>
<dbReference type="GO" id="GO:0061844">
    <property type="term" value="P:antimicrobial humoral immune response mediated by antimicrobial peptide"/>
    <property type="evidence" value="ECO:0000318"/>
    <property type="project" value="GO_Central"/>
</dbReference>
<dbReference type="GO" id="GO:0044344">
    <property type="term" value="P:cellular response to fibroblast growth factor stimulus"/>
    <property type="evidence" value="ECO:0007669"/>
    <property type="project" value="Ensembl"/>
</dbReference>
<dbReference type="GO" id="GO:0071347">
    <property type="term" value="P:cellular response to interleukin-1"/>
    <property type="evidence" value="ECO:0007669"/>
    <property type="project" value="Ensembl"/>
</dbReference>
<dbReference type="GO" id="GO:0071222">
    <property type="term" value="P:cellular response to lipopolysaccharide"/>
    <property type="evidence" value="ECO:0000318"/>
    <property type="project" value="GO_Central"/>
</dbReference>
<dbReference type="GO" id="GO:0071356">
    <property type="term" value="P:cellular response to tumor necrosis factor"/>
    <property type="evidence" value="ECO:0007669"/>
    <property type="project" value="Ensembl"/>
</dbReference>
<dbReference type="GO" id="GO:0048566">
    <property type="term" value="P:embryonic digestive tract development"/>
    <property type="evidence" value="ECO:0007669"/>
    <property type="project" value="Ensembl"/>
</dbReference>
<dbReference type="GO" id="GO:0050930">
    <property type="term" value="P:induction of positive chemotaxis"/>
    <property type="evidence" value="ECO:0000250"/>
    <property type="project" value="UniProtKB"/>
</dbReference>
<dbReference type="GO" id="GO:0006954">
    <property type="term" value="P:inflammatory response"/>
    <property type="evidence" value="ECO:0000318"/>
    <property type="project" value="GO_Central"/>
</dbReference>
<dbReference type="GO" id="GO:0035556">
    <property type="term" value="P:intracellular signal transduction"/>
    <property type="evidence" value="ECO:0007669"/>
    <property type="project" value="Ensembl"/>
</dbReference>
<dbReference type="GO" id="GO:0060354">
    <property type="term" value="P:negative regulation of cell adhesion molecule production"/>
    <property type="evidence" value="ECO:0007669"/>
    <property type="project" value="Ensembl"/>
</dbReference>
<dbReference type="GO" id="GO:0045744">
    <property type="term" value="P:negative regulation of G protein-coupled receptor signaling pathway"/>
    <property type="evidence" value="ECO:0007669"/>
    <property type="project" value="Ensembl"/>
</dbReference>
<dbReference type="GO" id="GO:0010629">
    <property type="term" value="P:negative regulation of gene expression"/>
    <property type="evidence" value="ECO:0007669"/>
    <property type="project" value="Ensembl"/>
</dbReference>
<dbReference type="GO" id="GO:0042119">
    <property type="term" value="P:neutrophil activation"/>
    <property type="evidence" value="ECO:0007669"/>
    <property type="project" value="Ensembl"/>
</dbReference>
<dbReference type="GO" id="GO:0030593">
    <property type="term" value="P:neutrophil chemotaxis"/>
    <property type="evidence" value="ECO:0000250"/>
    <property type="project" value="UniProtKB"/>
</dbReference>
<dbReference type="GO" id="GO:0045766">
    <property type="term" value="P:positive regulation of angiogenesis"/>
    <property type="evidence" value="ECO:0007669"/>
    <property type="project" value="Ensembl"/>
</dbReference>
<dbReference type="GO" id="GO:0010628">
    <property type="term" value="P:positive regulation of gene expression"/>
    <property type="evidence" value="ECO:0007669"/>
    <property type="project" value="Ensembl"/>
</dbReference>
<dbReference type="GO" id="GO:0031623">
    <property type="term" value="P:receptor internalization"/>
    <property type="evidence" value="ECO:0007669"/>
    <property type="project" value="Ensembl"/>
</dbReference>
<dbReference type="GO" id="GO:0030155">
    <property type="term" value="P:regulation of cell adhesion"/>
    <property type="evidence" value="ECO:0000250"/>
    <property type="project" value="UniProtKB"/>
</dbReference>
<dbReference type="GO" id="GO:2000535">
    <property type="term" value="P:regulation of entry of bacterium into host cell"/>
    <property type="evidence" value="ECO:0007669"/>
    <property type="project" value="Ensembl"/>
</dbReference>
<dbReference type="GO" id="GO:0045091">
    <property type="term" value="P:regulation of single stranded viral RNA replication via double stranded DNA intermediate"/>
    <property type="evidence" value="ECO:0000250"/>
    <property type="project" value="UniProtKB"/>
</dbReference>
<dbReference type="GO" id="GO:0034976">
    <property type="term" value="P:response to endoplasmic reticulum stress"/>
    <property type="evidence" value="ECO:0007669"/>
    <property type="project" value="Ensembl"/>
</dbReference>
<dbReference type="CDD" id="cd00273">
    <property type="entry name" value="Chemokine_CXC"/>
    <property type="match status" value="1"/>
</dbReference>
<dbReference type="FunFam" id="2.40.50.40:FF:000004">
    <property type="entry name" value="C-X-C motif chemokine"/>
    <property type="match status" value="1"/>
</dbReference>
<dbReference type="Gene3D" id="2.40.50.40">
    <property type="match status" value="1"/>
</dbReference>
<dbReference type="InterPro" id="IPR039809">
    <property type="entry name" value="Chemokine_b/g/d"/>
</dbReference>
<dbReference type="InterPro" id="IPR001089">
    <property type="entry name" value="Chemokine_CXC"/>
</dbReference>
<dbReference type="InterPro" id="IPR018048">
    <property type="entry name" value="Chemokine_CXC_CS"/>
</dbReference>
<dbReference type="InterPro" id="IPR001811">
    <property type="entry name" value="Chemokine_IL8-like_dom"/>
</dbReference>
<dbReference type="InterPro" id="IPR033899">
    <property type="entry name" value="CXC_Chemokine_domain"/>
</dbReference>
<dbReference type="InterPro" id="IPR036048">
    <property type="entry name" value="Interleukin_8-like_sf"/>
</dbReference>
<dbReference type="PANTHER" id="PTHR12015:SF200">
    <property type="entry name" value="INTERLEUKIN-8"/>
    <property type="match status" value="1"/>
</dbReference>
<dbReference type="PANTHER" id="PTHR12015">
    <property type="entry name" value="SMALL INDUCIBLE CYTOKINE A"/>
    <property type="match status" value="1"/>
</dbReference>
<dbReference type="Pfam" id="PF00048">
    <property type="entry name" value="IL8"/>
    <property type="match status" value="1"/>
</dbReference>
<dbReference type="PRINTS" id="PR00436">
    <property type="entry name" value="INTERLEUKIN8"/>
</dbReference>
<dbReference type="PRINTS" id="PR00437">
    <property type="entry name" value="SMALLCYTKCXC"/>
</dbReference>
<dbReference type="SMART" id="SM00199">
    <property type="entry name" value="SCY"/>
    <property type="match status" value="1"/>
</dbReference>
<dbReference type="SUPFAM" id="SSF54117">
    <property type="entry name" value="Interleukin 8-like chemokines"/>
    <property type="match status" value="1"/>
</dbReference>
<dbReference type="PROSITE" id="PS00471">
    <property type="entry name" value="SMALL_CYTOKINES_CXC"/>
    <property type="match status" value="1"/>
</dbReference>
<name>IL8_MACMU</name>
<accession>P67813</accession>
<accession>P51495</accession>